<protein>
    <recommendedName>
        <fullName evidence="1">tRNA uridine 5-carboxymethylaminomethyl modification enzyme MnmG</fullName>
    </recommendedName>
    <alternativeName>
        <fullName evidence="1">Glucose-inhibited division protein A</fullName>
    </alternativeName>
</protein>
<organism>
    <name type="scientific">Salmonella newport (strain SL254)</name>
    <dbReference type="NCBI Taxonomy" id="423368"/>
    <lineage>
        <taxon>Bacteria</taxon>
        <taxon>Pseudomonadati</taxon>
        <taxon>Pseudomonadota</taxon>
        <taxon>Gammaproteobacteria</taxon>
        <taxon>Enterobacterales</taxon>
        <taxon>Enterobacteriaceae</taxon>
        <taxon>Salmonella</taxon>
    </lineage>
</organism>
<evidence type="ECO:0000255" key="1">
    <source>
        <dbReference type="HAMAP-Rule" id="MF_00129"/>
    </source>
</evidence>
<gene>
    <name evidence="1" type="primary">mnmG</name>
    <name evidence="1" type="synonym">gidA</name>
    <name type="ordered locus">SNSL254_A4157</name>
</gene>
<name>MNMG_SALNS</name>
<sequence>MFYQDPFDVIIIGGGHAGTEAAMAAARMGQQTLLLTHNIDTLGQMSCNPAIGGIGKGHLVKEVDALGGLMAKAIDQAGIQFRILNASKGPAVRATRAQADRVLYRQAVRTALENQPNLMIFQQAVEDLIVENDRVVGAVTQMGLKFRAKAVVLTVGTFLDGKIHIGLDNYSGGRAGDPPSIPLSRRLRELPLRVSRLKTGTPPRIDARTIDFSVLAQQHGDNPMPVFSFMGNASQHPQQVPCYITHTNEKTHDVIRNNLDRSPMYAGVIEGIGPRYCPSIEDKVMRFADRNQHQIFLEPEGLTSNEIYPNGISTSLPFDVQMQIVRSMQGMENAKIVRPGYAIEYDFFDPRDLKPTLESKFIHGLFFAGQINGTTGYEEAAAQGLLAGLNAARLSADKEGWAPARSQAYLGVLVDDLCTLGTKEPYRMFTSRAEYRLMLREDNADLRLTEMGRELGLVDDERWARFNEKLENIERERQRLKSTWVTPSAESADEVNAHLTTPLSREASGEDLLRRPEMTYAQLTSLAAFAPALEDEQAAEQVEIQVKYEGYIARQQDEIEKQLRNENTLLPATLDYRQVSGLSNEVIAKLNDHKPASIGQASRISGVTPAAISILLVWLKKQGMLRRSA</sequence>
<feature type="chain" id="PRO_1000095664" description="tRNA uridine 5-carboxymethylaminomethyl modification enzyme MnmG">
    <location>
        <begin position="1"/>
        <end position="629"/>
    </location>
</feature>
<feature type="binding site" evidence="1">
    <location>
        <begin position="13"/>
        <end position="18"/>
    </location>
    <ligand>
        <name>FAD</name>
        <dbReference type="ChEBI" id="CHEBI:57692"/>
    </ligand>
</feature>
<feature type="binding site" evidence="1">
    <location>
        <position position="125"/>
    </location>
    <ligand>
        <name>FAD</name>
        <dbReference type="ChEBI" id="CHEBI:57692"/>
    </ligand>
</feature>
<feature type="binding site" evidence="1">
    <location>
        <position position="180"/>
    </location>
    <ligand>
        <name>FAD</name>
        <dbReference type="ChEBI" id="CHEBI:57692"/>
    </ligand>
</feature>
<feature type="binding site" evidence="1">
    <location>
        <begin position="273"/>
        <end position="287"/>
    </location>
    <ligand>
        <name>NAD(+)</name>
        <dbReference type="ChEBI" id="CHEBI:57540"/>
    </ligand>
</feature>
<feature type="binding site" evidence="1">
    <location>
        <position position="370"/>
    </location>
    <ligand>
        <name>FAD</name>
        <dbReference type="ChEBI" id="CHEBI:57692"/>
    </ligand>
</feature>
<keyword id="KW-0963">Cytoplasm</keyword>
<keyword id="KW-0274">FAD</keyword>
<keyword id="KW-0285">Flavoprotein</keyword>
<keyword id="KW-0520">NAD</keyword>
<keyword id="KW-0819">tRNA processing</keyword>
<dbReference type="EMBL" id="CP001113">
    <property type="protein sequence ID" value="ACF64427.1"/>
    <property type="molecule type" value="Genomic_DNA"/>
</dbReference>
<dbReference type="RefSeq" id="WP_000499872.1">
    <property type="nucleotide sequence ID" value="NZ_CCMR01000001.1"/>
</dbReference>
<dbReference type="SMR" id="B4SYE2"/>
<dbReference type="KEGG" id="see:SNSL254_A4157"/>
<dbReference type="HOGENOM" id="CLU_007831_2_2_6"/>
<dbReference type="Proteomes" id="UP000008824">
    <property type="component" value="Chromosome"/>
</dbReference>
<dbReference type="GO" id="GO:0005829">
    <property type="term" value="C:cytosol"/>
    <property type="evidence" value="ECO:0007669"/>
    <property type="project" value="TreeGrafter"/>
</dbReference>
<dbReference type="GO" id="GO:0050660">
    <property type="term" value="F:flavin adenine dinucleotide binding"/>
    <property type="evidence" value="ECO:0007669"/>
    <property type="project" value="UniProtKB-UniRule"/>
</dbReference>
<dbReference type="GO" id="GO:0030488">
    <property type="term" value="P:tRNA methylation"/>
    <property type="evidence" value="ECO:0007669"/>
    <property type="project" value="TreeGrafter"/>
</dbReference>
<dbReference type="GO" id="GO:0002098">
    <property type="term" value="P:tRNA wobble uridine modification"/>
    <property type="evidence" value="ECO:0007669"/>
    <property type="project" value="InterPro"/>
</dbReference>
<dbReference type="FunFam" id="1.10.10.1800:FF:000001">
    <property type="entry name" value="tRNA uridine 5-carboxymethylaminomethyl modification enzyme MnmG"/>
    <property type="match status" value="1"/>
</dbReference>
<dbReference type="FunFam" id="1.10.150.570:FF:000001">
    <property type="entry name" value="tRNA uridine 5-carboxymethylaminomethyl modification enzyme MnmG"/>
    <property type="match status" value="1"/>
</dbReference>
<dbReference type="FunFam" id="3.50.50.60:FF:000002">
    <property type="entry name" value="tRNA uridine 5-carboxymethylaminomethyl modification enzyme MnmG"/>
    <property type="match status" value="1"/>
</dbReference>
<dbReference type="FunFam" id="3.50.50.60:FF:000010">
    <property type="entry name" value="tRNA uridine 5-carboxymethylaminomethyl modification enzyme MnmG"/>
    <property type="match status" value="1"/>
</dbReference>
<dbReference type="Gene3D" id="3.50.50.60">
    <property type="entry name" value="FAD/NAD(P)-binding domain"/>
    <property type="match status" value="2"/>
</dbReference>
<dbReference type="Gene3D" id="1.10.150.570">
    <property type="entry name" value="GidA associated domain, C-terminal subdomain"/>
    <property type="match status" value="1"/>
</dbReference>
<dbReference type="Gene3D" id="1.10.10.1800">
    <property type="entry name" value="tRNA uridine 5-carboxymethylaminomethyl modification enzyme MnmG/GidA"/>
    <property type="match status" value="1"/>
</dbReference>
<dbReference type="HAMAP" id="MF_00129">
    <property type="entry name" value="MnmG_GidA"/>
    <property type="match status" value="1"/>
</dbReference>
<dbReference type="InterPro" id="IPR036188">
    <property type="entry name" value="FAD/NAD-bd_sf"/>
</dbReference>
<dbReference type="InterPro" id="IPR049312">
    <property type="entry name" value="GIDA_C_N"/>
</dbReference>
<dbReference type="InterPro" id="IPR004416">
    <property type="entry name" value="MnmG"/>
</dbReference>
<dbReference type="InterPro" id="IPR002218">
    <property type="entry name" value="MnmG-rel"/>
</dbReference>
<dbReference type="InterPro" id="IPR020595">
    <property type="entry name" value="MnmG-rel_CS"/>
</dbReference>
<dbReference type="InterPro" id="IPR026904">
    <property type="entry name" value="MnmG_C"/>
</dbReference>
<dbReference type="InterPro" id="IPR047001">
    <property type="entry name" value="MnmG_C_subdom"/>
</dbReference>
<dbReference type="InterPro" id="IPR044920">
    <property type="entry name" value="MnmG_C_subdom_sf"/>
</dbReference>
<dbReference type="InterPro" id="IPR040131">
    <property type="entry name" value="MnmG_N"/>
</dbReference>
<dbReference type="NCBIfam" id="TIGR00136">
    <property type="entry name" value="mnmG_gidA"/>
    <property type="match status" value="1"/>
</dbReference>
<dbReference type="PANTHER" id="PTHR11806">
    <property type="entry name" value="GLUCOSE INHIBITED DIVISION PROTEIN A"/>
    <property type="match status" value="1"/>
</dbReference>
<dbReference type="PANTHER" id="PTHR11806:SF0">
    <property type="entry name" value="PROTEIN MTO1 HOMOLOG, MITOCHONDRIAL"/>
    <property type="match status" value="1"/>
</dbReference>
<dbReference type="Pfam" id="PF01134">
    <property type="entry name" value="GIDA"/>
    <property type="match status" value="1"/>
</dbReference>
<dbReference type="Pfam" id="PF21680">
    <property type="entry name" value="GIDA_C_1st"/>
    <property type="match status" value="1"/>
</dbReference>
<dbReference type="Pfam" id="PF13932">
    <property type="entry name" value="SAM_GIDA_C"/>
    <property type="match status" value="1"/>
</dbReference>
<dbReference type="SMART" id="SM01228">
    <property type="entry name" value="GIDA_assoc_3"/>
    <property type="match status" value="1"/>
</dbReference>
<dbReference type="SUPFAM" id="SSF51905">
    <property type="entry name" value="FAD/NAD(P)-binding domain"/>
    <property type="match status" value="1"/>
</dbReference>
<dbReference type="PROSITE" id="PS01280">
    <property type="entry name" value="GIDA_1"/>
    <property type="match status" value="1"/>
</dbReference>
<dbReference type="PROSITE" id="PS01281">
    <property type="entry name" value="GIDA_2"/>
    <property type="match status" value="1"/>
</dbReference>
<comment type="function">
    <text evidence="1">NAD-binding protein involved in the addition of a carboxymethylaminomethyl (cmnm) group at the wobble position (U34) of certain tRNAs, forming tRNA-cmnm(5)s(2)U34.</text>
</comment>
<comment type="cofactor">
    <cofactor evidence="1">
        <name>FAD</name>
        <dbReference type="ChEBI" id="CHEBI:57692"/>
    </cofactor>
</comment>
<comment type="subunit">
    <text evidence="1">Homodimer. Heterotetramer of two MnmE and two MnmG subunits.</text>
</comment>
<comment type="subcellular location">
    <subcellularLocation>
        <location evidence="1">Cytoplasm</location>
    </subcellularLocation>
</comment>
<comment type="similarity">
    <text evidence="1">Belongs to the MnmG family.</text>
</comment>
<proteinExistence type="inferred from homology"/>
<reference key="1">
    <citation type="journal article" date="2011" name="J. Bacteriol.">
        <title>Comparative genomics of 28 Salmonella enterica isolates: evidence for CRISPR-mediated adaptive sublineage evolution.</title>
        <authorList>
            <person name="Fricke W.F."/>
            <person name="Mammel M.K."/>
            <person name="McDermott P.F."/>
            <person name="Tartera C."/>
            <person name="White D.G."/>
            <person name="Leclerc J.E."/>
            <person name="Ravel J."/>
            <person name="Cebula T.A."/>
        </authorList>
    </citation>
    <scope>NUCLEOTIDE SEQUENCE [LARGE SCALE GENOMIC DNA]</scope>
    <source>
        <strain>SL254</strain>
    </source>
</reference>
<accession>B4SYE2</accession>